<sequence length="179" mass="19521">MSRIGRLPIPVPAGVDVTIDGRTVTVKGPRGTLTHTIAEPITVEKAEDGTLHVRRPDDENRTRGLHGLTRTLIANMITGVTQGFAKTLEIVGTGYRVQARGSDLEFALGFSHPVVVRPPEGISFEVQTPTRFVVHGIDKQKVGEVAANIRKLRKPEPYKGKGVRYQGENVRRKVGKAGK</sequence>
<reference key="1">
    <citation type="journal article" date="2009" name="Genome Res.">
        <title>Complete genome of the cellulolytic thermophile Acidothermus cellulolyticus 11B provides insights into its ecophysiological and evolutionary adaptations.</title>
        <authorList>
            <person name="Barabote R.D."/>
            <person name="Xie G."/>
            <person name="Leu D.H."/>
            <person name="Normand P."/>
            <person name="Necsulea A."/>
            <person name="Daubin V."/>
            <person name="Medigue C."/>
            <person name="Adney W.S."/>
            <person name="Xu X.C."/>
            <person name="Lapidus A."/>
            <person name="Parales R.E."/>
            <person name="Detter C."/>
            <person name="Pujic P."/>
            <person name="Bruce D."/>
            <person name="Lavire C."/>
            <person name="Challacombe J.F."/>
            <person name="Brettin T.S."/>
            <person name="Berry A.M."/>
        </authorList>
    </citation>
    <scope>NUCLEOTIDE SEQUENCE [LARGE SCALE GENOMIC DNA]</scope>
    <source>
        <strain>ATCC 43068 / DSM 8971 / 11B</strain>
    </source>
</reference>
<keyword id="KW-1185">Reference proteome</keyword>
<keyword id="KW-0687">Ribonucleoprotein</keyword>
<keyword id="KW-0689">Ribosomal protein</keyword>
<keyword id="KW-0694">RNA-binding</keyword>
<keyword id="KW-0699">rRNA-binding</keyword>
<name>RL6_ACIC1</name>
<accession>A0LRN5</accession>
<proteinExistence type="inferred from homology"/>
<feature type="chain" id="PRO_1000055185" description="Large ribosomal subunit protein uL6">
    <location>
        <begin position="1"/>
        <end position="179"/>
    </location>
</feature>
<comment type="function">
    <text evidence="1">This protein binds to the 23S rRNA, and is important in its secondary structure. It is located near the subunit interface in the base of the L7/L12 stalk, and near the tRNA binding site of the peptidyltransferase center.</text>
</comment>
<comment type="subunit">
    <text evidence="1">Part of the 50S ribosomal subunit.</text>
</comment>
<comment type="similarity">
    <text evidence="1">Belongs to the universal ribosomal protein uL6 family.</text>
</comment>
<gene>
    <name evidence="1" type="primary">rplF</name>
    <name type="ordered locus">Acel_0321</name>
</gene>
<protein>
    <recommendedName>
        <fullName evidence="1">Large ribosomal subunit protein uL6</fullName>
    </recommendedName>
    <alternativeName>
        <fullName evidence="2">50S ribosomal protein L6</fullName>
    </alternativeName>
</protein>
<organism>
    <name type="scientific">Acidothermus cellulolyticus (strain ATCC 43068 / DSM 8971 / 11B)</name>
    <dbReference type="NCBI Taxonomy" id="351607"/>
    <lineage>
        <taxon>Bacteria</taxon>
        <taxon>Bacillati</taxon>
        <taxon>Actinomycetota</taxon>
        <taxon>Actinomycetes</taxon>
        <taxon>Acidothermales</taxon>
        <taxon>Acidothermaceae</taxon>
        <taxon>Acidothermus</taxon>
    </lineage>
</organism>
<evidence type="ECO:0000255" key="1">
    <source>
        <dbReference type="HAMAP-Rule" id="MF_01365"/>
    </source>
</evidence>
<evidence type="ECO:0000305" key="2"/>
<dbReference type="EMBL" id="CP000481">
    <property type="protein sequence ID" value="ABK52095.1"/>
    <property type="molecule type" value="Genomic_DNA"/>
</dbReference>
<dbReference type="RefSeq" id="WP_011719158.1">
    <property type="nucleotide sequence ID" value="NC_008578.1"/>
</dbReference>
<dbReference type="SMR" id="A0LRN5"/>
<dbReference type="FunCoup" id="A0LRN5">
    <property type="interactions" value="325"/>
</dbReference>
<dbReference type="STRING" id="351607.Acel_0321"/>
<dbReference type="KEGG" id="ace:Acel_0321"/>
<dbReference type="eggNOG" id="COG0097">
    <property type="taxonomic scope" value="Bacteria"/>
</dbReference>
<dbReference type="HOGENOM" id="CLU_065464_1_2_11"/>
<dbReference type="InParanoid" id="A0LRN5"/>
<dbReference type="OrthoDB" id="9805007at2"/>
<dbReference type="Proteomes" id="UP000008221">
    <property type="component" value="Chromosome"/>
</dbReference>
<dbReference type="GO" id="GO:0022625">
    <property type="term" value="C:cytosolic large ribosomal subunit"/>
    <property type="evidence" value="ECO:0007669"/>
    <property type="project" value="TreeGrafter"/>
</dbReference>
<dbReference type="GO" id="GO:0019843">
    <property type="term" value="F:rRNA binding"/>
    <property type="evidence" value="ECO:0007669"/>
    <property type="project" value="UniProtKB-UniRule"/>
</dbReference>
<dbReference type="GO" id="GO:0003735">
    <property type="term" value="F:structural constituent of ribosome"/>
    <property type="evidence" value="ECO:0007669"/>
    <property type="project" value="InterPro"/>
</dbReference>
<dbReference type="GO" id="GO:0002181">
    <property type="term" value="P:cytoplasmic translation"/>
    <property type="evidence" value="ECO:0007669"/>
    <property type="project" value="TreeGrafter"/>
</dbReference>
<dbReference type="FunFam" id="3.90.930.12:FF:000001">
    <property type="entry name" value="50S ribosomal protein L6"/>
    <property type="match status" value="1"/>
</dbReference>
<dbReference type="FunFam" id="3.90.930.12:FF:000002">
    <property type="entry name" value="50S ribosomal protein L6"/>
    <property type="match status" value="1"/>
</dbReference>
<dbReference type="Gene3D" id="3.90.930.12">
    <property type="entry name" value="Ribosomal protein L6, alpha-beta domain"/>
    <property type="match status" value="2"/>
</dbReference>
<dbReference type="HAMAP" id="MF_01365_B">
    <property type="entry name" value="Ribosomal_uL6_B"/>
    <property type="match status" value="1"/>
</dbReference>
<dbReference type="InterPro" id="IPR000702">
    <property type="entry name" value="Ribosomal_uL6-like"/>
</dbReference>
<dbReference type="InterPro" id="IPR036789">
    <property type="entry name" value="Ribosomal_uL6-like_a/b-dom_sf"/>
</dbReference>
<dbReference type="InterPro" id="IPR020040">
    <property type="entry name" value="Ribosomal_uL6_a/b-dom"/>
</dbReference>
<dbReference type="InterPro" id="IPR019906">
    <property type="entry name" value="Ribosomal_uL6_bac-type"/>
</dbReference>
<dbReference type="InterPro" id="IPR002358">
    <property type="entry name" value="Ribosomal_uL6_CS"/>
</dbReference>
<dbReference type="NCBIfam" id="TIGR03654">
    <property type="entry name" value="L6_bact"/>
    <property type="match status" value="1"/>
</dbReference>
<dbReference type="PANTHER" id="PTHR11655">
    <property type="entry name" value="60S/50S RIBOSOMAL PROTEIN L6/L9"/>
    <property type="match status" value="1"/>
</dbReference>
<dbReference type="PANTHER" id="PTHR11655:SF14">
    <property type="entry name" value="LARGE RIBOSOMAL SUBUNIT PROTEIN UL6M"/>
    <property type="match status" value="1"/>
</dbReference>
<dbReference type="Pfam" id="PF00347">
    <property type="entry name" value="Ribosomal_L6"/>
    <property type="match status" value="2"/>
</dbReference>
<dbReference type="PIRSF" id="PIRSF002162">
    <property type="entry name" value="Ribosomal_L6"/>
    <property type="match status" value="1"/>
</dbReference>
<dbReference type="PRINTS" id="PR00059">
    <property type="entry name" value="RIBOSOMALL6"/>
</dbReference>
<dbReference type="SUPFAM" id="SSF56053">
    <property type="entry name" value="Ribosomal protein L6"/>
    <property type="match status" value="2"/>
</dbReference>
<dbReference type="PROSITE" id="PS00525">
    <property type="entry name" value="RIBOSOMAL_L6_1"/>
    <property type="match status" value="1"/>
</dbReference>